<reference key="1">
    <citation type="submission" date="2007-03" db="EMBL/GenBank/DDBJ databases">
        <title>Complete sequence of Shewanella loihica PV-4.</title>
        <authorList>
            <consortium name="US DOE Joint Genome Institute"/>
            <person name="Copeland A."/>
            <person name="Lucas S."/>
            <person name="Lapidus A."/>
            <person name="Barry K."/>
            <person name="Detter J.C."/>
            <person name="Glavina del Rio T."/>
            <person name="Hammon N."/>
            <person name="Israni S."/>
            <person name="Dalin E."/>
            <person name="Tice H."/>
            <person name="Pitluck S."/>
            <person name="Chain P."/>
            <person name="Malfatti S."/>
            <person name="Shin M."/>
            <person name="Vergez L."/>
            <person name="Schmutz J."/>
            <person name="Larimer F."/>
            <person name="Land M."/>
            <person name="Hauser L."/>
            <person name="Kyrpides N."/>
            <person name="Mikhailova N."/>
            <person name="Romine M.F."/>
            <person name="Serres G."/>
            <person name="Fredrickson J."/>
            <person name="Tiedje J."/>
            <person name="Richardson P."/>
        </authorList>
    </citation>
    <scope>NUCLEOTIDE SEQUENCE [LARGE SCALE GENOMIC DNA]</scope>
    <source>
        <strain>ATCC BAA-1088 / PV-4</strain>
    </source>
</reference>
<protein>
    <recommendedName>
        <fullName evidence="1">Small ribosomal subunit protein uS15</fullName>
    </recommendedName>
    <alternativeName>
        <fullName evidence="2">30S ribosomal protein S15</fullName>
    </alternativeName>
</protein>
<dbReference type="EMBL" id="CP000606">
    <property type="protein sequence ID" value="ABO24690.1"/>
    <property type="molecule type" value="Genomic_DNA"/>
</dbReference>
<dbReference type="RefSeq" id="WP_011866621.1">
    <property type="nucleotide sequence ID" value="NC_009092.1"/>
</dbReference>
<dbReference type="SMR" id="A3QGU2"/>
<dbReference type="STRING" id="323850.Shew_2824"/>
<dbReference type="KEGG" id="slo:Shew_2824"/>
<dbReference type="eggNOG" id="COG0184">
    <property type="taxonomic scope" value="Bacteria"/>
</dbReference>
<dbReference type="HOGENOM" id="CLU_148518_0_0_6"/>
<dbReference type="OrthoDB" id="9799262at2"/>
<dbReference type="Proteomes" id="UP000001558">
    <property type="component" value="Chromosome"/>
</dbReference>
<dbReference type="GO" id="GO:0022627">
    <property type="term" value="C:cytosolic small ribosomal subunit"/>
    <property type="evidence" value="ECO:0007669"/>
    <property type="project" value="TreeGrafter"/>
</dbReference>
<dbReference type="GO" id="GO:0019843">
    <property type="term" value="F:rRNA binding"/>
    <property type="evidence" value="ECO:0007669"/>
    <property type="project" value="UniProtKB-UniRule"/>
</dbReference>
<dbReference type="GO" id="GO:0003735">
    <property type="term" value="F:structural constituent of ribosome"/>
    <property type="evidence" value="ECO:0007669"/>
    <property type="project" value="InterPro"/>
</dbReference>
<dbReference type="GO" id="GO:0006412">
    <property type="term" value="P:translation"/>
    <property type="evidence" value="ECO:0007669"/>
    <property type="project" value="UniProtKB-UniRule"/>
</dbReference>
<dbReference type="CDD" id="cd00353">
    <property type="entry name" value="Ribosomal_S15p_S13e"/>
    <property type="match status" value="1"/>
</dbReference>
<dbReference type="FunFam" id="1.10.287.10:FF:000002">
    <property type="entry name" value="30S ribosomal protein S15"/>
    <property type="match status" value="1"/>
</dbReference>
<dbReference type="Gene3D" id="6.10.250.3130">
    <property type="match status" value="1"/>
</dbReference>
<dbReference type="Gene3D" id="1.10.287.10">
    <property type="entry name" value="S15/NS1, RNA-binding"/>
    <property type="match status" value="1"/>
</dbReference>
<dbReference type="HAMAP" id="MF_01343_B">
    <property type="entry name" value="Ribosomal_uS15_B"/>
    <property type="match status" value="1"/>
</dbReference>
<dbReference type="InterPro" id="IPR000589">
    <property type="entry name" value="Ribosomal_uS15"/>
</dbReference>
<dbReference type="InterPro" id="IPR005290">
    <property type="entry name" value="Ribosomal_uS15_bac-type"/>
</dbReference>
<dbReference type="InterPro" id="IPR009068">
    <property type="entry name" value="uS15_NS1_RNA-bd_sf"/>
</dbReference>
<dbReference type="NCBIfam" id="TIGR00952">
    <property type="entry name" value="S15_bact"/>
    <property type="match status" value="1"/>
</dbReference>
<dbReference type="PANTHER" id="PTHR23321">
    <property type="entry name" value="RIBOSOMAL PROTEIN S15, BACTERIAL AND ORGANELLAR"/>
    <property type="match status" value="1"/>
</dbReference>
<dbReference type="PANTHER" id="PTHR23321:SF26">
    <property type="entry name" value="SMALL RIBOSOMAL SUBUNIT PROTEIN US15M"/>
    <property type="match status" value="1"/>
</dbReference>
<dbReference type="Pfam" id="PF00312">
    <property type="entry name" value="Ribosomal_S15"/>
    <property type="match status" value="1"/>
</dbReference>
<dbReference type="SMART" id="SM01387">
    <property type="entry name" value="Ribosomal_S15"/>
    <property type="match status" value="1"/>
</dbReference>
<dbReference type="SUPFAM" id="SSF47060">
    <property type="entry name" value="S15/NS1 RNA-binding domain"/>
    <property type="match status" value="1"/>
</dbReference>
<dbReference type="PROSITE" id="PS00362">
    <property type="entry name" value="RIBOSOMAL_S15"/>
    <property type="match status" value="1"/>
</dbReference>
<gene>
    <name evidence="1" type="primary">rpsO</name>
    <name type="ordered locus">Shew_2824</name>
</gene>
<proteinExistence type="inferred from homology"/>
<accession>A3QGU2</accession>
<feature type="chain" id="PRO_1000054869" description="Small ribosomal subunit protein uS15">
    <location>
        <begin position="1"/>
        <end position="89"/>
    </location>
</feature>
<organism>
    <name type="scientific">Shewanella loihica (strain ATCC BAA-1088 / PV-4)</name>
    <dbReference type="NCBI Taxonomy" id="323850"/>
    <lineage>
        <taxon>Bacteria</taxon>
        <taxon>Pseudomonadati</taxon>
        <taxon>Pseudomonadota</taxon>
        <taxon>Gammaproteobacteria</taxon>
        <taxon>Alteromonadales</taxon>
        <taxon>Shewanellaceae</taxon>
        <taxon>Shewanella</taxon>
    </lineage>
</organism>
<keyword id="KW-1185">Reference proteome</keyword>
<keyword id="KW-0687">Ribonucleoprotein</keyword>
<keyword id="KW-0689">Ribosomal protein</keyword>
<keyword id="KW-0694">RNA-binding</keyword>
<keyword id="KW-0699">rRNA-binding</keyword>
<sequence length="89" mass="10387">MSLSKEVKAQILADFGRGENDTGSTEVQVALLTAQINHLQGHFKEHIHDHHSRRGLLRMVNSRRKLLAYLKRTENERYQELIKKLGLRR</sequence>
<name>RS15_SHELP</name>
<comment type="function">
    <text evidence="1">One of the primary rRNA binding proteins, it binds directly to 16S rRNA where it helps nucleate assembly of the platform of the 30S subunit by binding and bridging several RNA helices of the 16S rRNA.</text>
</comment>
<comment type="function">
    <text evidence="1">Forms an intersubunit bridge (bridge B4) with the 23S rRNA of the 50S subunit in the ribosome.</text>
</comment>
<comment type="subunit">
    <text evidence="1">Part of the 30S ribosomal subunit. Forms a bridge to the 50S subunit in the 70S ribosome, contacting the 23S rRNA.</text>
</comment>
<comment type="similarity">
    <text evidence="1">Belongs to the universal ribosomal protein uS15 family.</text>
</comment>
<evidence type="ECO:0000255" key="1">
    <source>
        <dbReference type="HAMAP-Rule" id="MF_01343"/>
    </source>
</evidence>
<evidence type="ECO:0000305" key="2"/>